<gene>
    <name type="primary">HUA1</name>
    <name type="ordered locus">At3g12680</name>
    <name type="ORF">T2E22.1</name>
</gene>
<feature type="chain" id="PRO_0000371992" description="Zinc finger CCCH domain-containing protein 37">
    <location>
        <begin position="1"/>
        <end position="524"/>
    </location>
</feature>
<feature type="zinc finger region" description="C3H1-type 1" evidence="1">
    <location>
        <begin position="174"/>
        <end position="202"/>
    </location>
</feature>
<feature type="zinc finger region" description="C3H1-type 2" evidence="1">
    <location>
        <begin position="225"/>
        <end position="253"/>
    </location>
</feature>
<feature type="zinc finger region" description="C3H1-type 3" evidence="1">
    <location>
        <begin position="268"/>
        <end position="296"/>
    </location>
</feature>
<feature type="zinc finger region" description="C3H1-type 4" evidence="1">
    <location>
        <begin position="340"/>
        <end position="368"/>
    </location>
</feature>
<feature type="zinc finger region" description="C3H1-type 5" evidence="1">
    <location>
        <begin position="420"/>
        <end position="448"/>
    </location>
</feature>
<feature type="zinc finger region" description="C3H1-type 6" evidence="1">
    <location>
        <begin position="473"/>
        <end position="501"/>
    </location>
</feature>
<feature type="region of interest" description="Disordered" evidence="2">
    <location>
        <begin position="19"/>
        <end position="39"/>
    </location>
</feature>
<feature type="region of interest" description="Disordered" evidence="2">
    <location>
        <begin position="300"/>
        <end position="319"/>
    </location>
</feature>
<feature type="region of interest" description="Disordered" evidence="2">
    <location>
        <begin position="505"/>
        <end position="524"/>
    </location>
</feature>
<feature type="compositionally biased region" description="Pro residues" evidence="2">
    <location>
        <begin position="24"/>
        <end position="35"/>
    </location>
</feature>
<feature type="compositionally biased region" description="Low complexity" evidence="2">
    <location>
        <begin position="512"/>
        <end position="524"/>
    </location>
</feature>
<accession>Q941Q3</accession>
<accession>Q0WPD0</accession>
<accession>Q9C7B5</accession>
<accession>Q9LTW6</accession>
<proteinExistence type="evidence at protein level"/>
<reference key="1">
    <citation type="journal article" date="2001" name="Plant Cell">
        <title>HUA1, a regulator of stamen and carpel identities in Arabidopsis, codes for a nuclear RNA binding protein.</title>
        <authorList>
            <person name="Li J."/>
            <person name="Jia D."/>
            <person name="Chen X."/>
        </authorList>
    </citation>
    <scope>NUCLEOTIDE SEQUENCE [MRNA]</scope>
    <scope>FUNCTION</scope>
    <scope>SUBCELLULAR LOCATION</scope>
    <scope>TISSUE SPECIFICITY</scope>
</reference>
<reference key="2">
    <citation type="journal article" date="2000" name="DNA Res.">
        <title>Structural analysis of Arabidopsis thaliana chromosome 3. I. Sequence features of the regions of 4,504,864 bp covered by sixty P1 and TAC clones.</title>
        <authorList>
            <person name="Sato S."/>
            <person name="Nakamura Y."/>
            <person name="Kaneko T."/>
            <person name="Katoh T."/>
            <person name="Asamizu E."/>
            <person name="Tabata S."/>
        </authorList>
    </citation>
    <scope>NUCLEOTIDE SEQUENCE [LARGE SCALE GENOMIC DNA]</scope>
    <source>
        <strain>cv. Columbia</strain>
    </source>
</reference>
<reference key="3">
    <citation type="journal article" date="2000" name="Nature">
        <title>Sequence and analysis of chromosome 3 of the plant Arabidopsis thaliana.</title>
        <authorList>
            <person name="Salanoubat M."/>
            <person name="Lemcke K."/>
            <person name="Rieger M."/>
            <person name="Ansorge W."/>
            <person name="Unseld M."/>
            <person name="Fartmann B."/>
            <person name="Valle G."/>
            <person name="Bloecker H."/>
            <person name="Perez-Alonso M."/>
            <person name="Obermaier B."/>
            <person name="Delseny M."/>
            <person name="Boutry M."/>
            <person name="Grivell L.A."/>
            <person name="Mache R."/>
            <person name="Puigdomenech P."/>
            <person name="De Simone V."/>
            <person name="Choisne N."/>
            <person name="Artiguenave F."/>
            <person name="Robert C."/>
            <person name="Brottier P."/>
            <person name="Wincker P."/>
            <person name="Cattolico L."/>
            <person name="Weissenbach J."/>
            <person name="Saurin W."/>
            <person name="Quetier F."/>
            <person name="Schaefer M."/>
            <person name="Mueller-Auer S."/>
            <person name="Gabel C."/>
            <person name="Fuchs M."/>
            <person name="Benes V."/>
            <person name="Wurmbach E."/>
            <person name="Drzonek H."/>
            <person name="Erfle H."/>
            <person name="Jordan N."/>
            <person name="Bangert S."/>
            <person name="Wiedelmann R."/>
            <person name="Kranz H."/>
            <person name="Voss H."/>
            <person name="Holland R."/>
            <person name="Brandt P."/>
            <person name="Nyakatura G."/>
            <person name="Vezzi A."/>
            <person name="D'Angelo M."/>
            <person name="Pallavicini A."/>
            <person name="Toppo S."/>
            <person name="Simionati B."/>
            <person name="Conrad A."/>
            <person name="Hornischer K."/>
            <person name="Kauer G."/>
            <person name="Loehnert T.-H."/>
            <person name="Nordsiek G."/>
            <person name="Reichelt J."/>
            <person name="Scharfe M."/>
            <person name="Schoen O."/>
            <person name="Bargues M."/>
            <person name="Terol J."/>
            <person name="Climent J."/>
            <person name="Navarro P."/>
            <person name="Collado C."/>
            <person name="Perez-Perez A."/>
            <person name="Ottenwaelder B."/>
            <person name="Duchemin D."/>
            <person name="Cooke R."/>
            <person name="Laudie M."/>
            <person name="Berger-Llauro C."/>
            <person name="Purnelle B."/>
            <person name="Masuy D."/>
            <person name="de Haan M."/>
            <person name="Maarse A.C."/>
            <person name="Alcaraz J.-P."/>
            <person name="Cottet A."/>
            <person name="Casacuberta E."/>
            <person name="Monfort A."/>
            <person name="Argiriou A."/>
            <person name="Flores M."/>
            <person name="Liguori R."/>
            <person name="Vitale D."/>
            <person name="Mannhaupt G."/>
            <person name="Haase D."/>
            <person name="Schoof H."/>
            <person name="Rudd S."/>
            <person name="Zaccaria P."/>
            <person name="Mewes H.-W."/>
            <person name="Mayer K.F.X."/>
            <person name="Kaul S."/>
            <person name="Town C.D."/>
            <person name="Koo H.L."/>
            <person name="Tallon L.J."/>
            <person name="Jenkins J."/>
            <person name="Rooney T."/>
            <person name="Rizzo M."/>
            <person name="Walts A."/>
            <person name="Utterback T."/>
            <person name="Fujii C.Y."/>
            <person name="Shea T.P."/>
            <person name="Creasy T.H."/>
            <person name="Haas B."/>
            <person name="Maiti R."/>
            <person name="Wu D."/>
            <person name="Peterson J."/>
            <person name="Van Aken S."/>
            <person name="Pai G."/>
            <person name="Militscher J."/>
            <person name="Sellers P."/>
            <person name="Gill J.E."/>
            <person name="Feldblyum T.V."/>
            <person name="Preuss D."/>
            <person name="Lin X."/>
            <person name="Nierman W.C."/>
            <person name="Salzberg S.L."/>
            <person name="White O."/>
            <person name="Venter J.C."/>
            <person name="Fraser C.M."/>
            <person name="Kaneko T."/>
            <person name="Nakamura Y."/>
            <person name="Sato S."/>
            <person name="Kato T."/>
            <person name="Asamizu E."/>
            <person name="Sasamoto S."/>
            <person name="Kimura T."/>
            <person name="Idesawa K."/>
            <person name="Kawashima K."/>
            <person name="Kishida Y."/>
            <person name="Kiyokawa C."/>
            <person name="Kohara M."/>
            <person name="Matsumoto M."/>
            <person name="Matsuno A."/>
            <person name="Muraki A."/>
            <person name="Nakayama S."/>
            <person name="Nakazaki N."/>
            <person name="Shinpo S."/>
            <person name="Takeuchi C."/>
            <person name="Wada T."/>
            <person name="Watanabe A."/>
            <person name="Yamada M."/>
            <person name="Yasuda M."/>
            <person name="Tabata S."/>
        </authorList>
    </citation>
    <scope>NUCLEOTIDE SEQUENCE [LARGE SCALE GENOMIC DNA]</scope>
    <source>
        <strain>cv. Columbia</strain>
    </source>
</reference>
<reference key="4">
    <citation type="journal article" date="2017" name="Plant J.">
        <title>Araport11: a complete reannotation of the Arabidopsis thaliana reference genome.</title>
        <authorList>
            <person name="Cheng C.Y."/>
            <person name="Krishnakumar V."/>
            <person name="Chan A.P."/>
            <person name="Thibaud-Nissen F."/>
            <person name="Schobel S."/>
            <person name="Town C.D."/>
        </authorList>
    </citation>
    <scope>GENOME REANNOTATION</scope>
    <source>
        <strain>cv. Columbia</strain>
    </source>
</reference>
<reference key="5">
    <citation type="submission" date="2006-07" db="EMBL/GenBank/DDBJ databases">
        <title>Large-scale analysis of RIKEN Arabidopsis full-length (RAFL) cDNAs.</title>
        <authorList>
            <person name="Totoki Y."/>
            <person name="Seki M."/>
            <person name="Ishida J."/>
            <person name="Nakajima M."/>
            <person name="Enju A."/>
            <person name="Kamiya A."/>
            <person name="Narusaka M."/>
            <person name="Shin-i T."/>
            <person name="Nakagawa M."/>
            <person name="Sakamoto N."/>
            <person name="Oishi K."/>
            <person name="Kohara Y."/>
            <person name="Kobayashi M."/>
            <person name="Toyoda A."/>
            <person name="Sakaki Y."/>
            <person name="Sakurai T."/>
            <person name="Iida K."/>
            <person name="Akiyama K."/>
            <person name="Satou M."/>
            <person name="Toyoda T."/>
            <person name="Konagaya A."/>
            <person name="Carninci P."/>
            <person name="Kawai J."/>
            <person name="Hayashizaki Y."/>
            <person name="Shinozaki K."/>
        </authorList>
    </citation>
    <scope>NUCLEOTIDE SEQUENCE [LARGE SCALE MRNA] OF 3-524</scope>
    <source>
        <strain>cv. Columbia</strain>
    </source>
</reference>
<reference key="6">
    <citation type="journal article" date="2003" name="Dev. Cell">
        <title>Two RNA binding proteins, HEN4 and HUA1, act in the processing of AGAMOUS pre-mRNA in Arabidopsis thaliana.</title>
        <authorList>
            <person name="Cheng Y."/>
            <person name="Kato N."/>
            <person name="Wang W."/>
            <person name="Li J."/>
            <person name="Chen X."/>
        </authorList>
    </citation>
    <scope>FUNCTION</scope>
    <scope>SUBCELLULAR LOCATION</scope>
    <scope>INTERACTION WITH HEN4</scope>
</reference>
<reference key="7">
    <citation type="journal article" date="2008" name="BMC Genomics">
        <title>Genome-wide analysis of CCCH zinc finger family in Arabidopsis and rice.</title>
        <authorList>
            <person name="Wang D."/>
            <person name="Guo Y."/>
            <person name="Wu C."/>
            <person name="Yang G."/>
            <person name="Li Y."/>
            <person name="Zheng C."/>
        </authorList>
    </citation>
    <scope>NOMENCLATURE</scope>
</reference>
<reference key="8">
    <citation type="journal article" date="2015" name="PLoS Genet.">
        <title>K-homology nuclear ribonucleoproteins regulate floral organ identity and determinacy in arabidopsis.</title>
        <authorList>
            <person name="Rodriguez-Cazorla E."/>
            <person name="Ripoll J.J."/>
            <person name="Andujar A."/>
            <person name="Bailey L.J."/>
            <person name="Martinez-Laborda A."/>
            <person name="Yanofsky M.F."/>
            <person name="Vera A."/>
        </authorList>
    </citation>
    <scope>INTERACTION WITH FLK AND PEP</scope>
</reference>
<organism>
    <name type="scientific">Arabidopsis thaliana</name>
    <name type="common">Mouse-ear cress</name>
    <dbReference type="NCBI Taxonomy" id="3702"/>
    <lineage>
        <taxon>Eukaryota</taxon>
        <taxon>Viridiplantae</taxon>
        <taxon>Streptophyta</taxon>
        <taxon>Embryophyta</taxon>
        <taxon>Tracheophyta</taxon>
        <taxon>Spermatophyta</taxon>
        <taxon>Magnoliopsida</taxon>
        <taxon>eudicotyledons</taxon>
        <taxon>Gunneridae</taxon>
        <taxon>Pentapetalae</taxon>
        <taxon>rosids</taxon>
        <taxon>malvids</taxon>
        <taxon>Brassicales</taxon>
        <taxon>Brassicaceae</taxon>
        <taxon>Camelineae</taxon>
        <taxon>Arabidopsis</taxon>
    </lineage>
</organism>
<comment type="function">
    <text evidence="3 4">Involved in flower development (PubMed:11595801, PubMed:12530963). Functions in floral reproductive organ identity by binding AGAMOUS (AG) pre-mRNA and promoting its processing. Functions in association with HUA2 and HEN4 (PubMed:12530963).</text>
</comment>
<comment type="subunit">
    <text evidence="4 5">Interacts with HEN4 (PubMed:12530963). Interacts with FLK and PEP (PubMed:25658099).</text>
</comment>
<comment type="subcellular location">
    <subcellularLocation>
        <location evidence="3 4">Nucleus speckle</location>
    </subcellularLocation>
    <text>Nuclear with a speckled distribution pattern.</text>
</comment>
<comment type="tissue specificity">
    <text evidence="3">Highly expressed in inflorescences, at intermediate levels in leaves and stems and at lower levels in roots.</text>
</comment>
<comment type="sequence caution" evidence="6">
    <conflict type="erroneous gene model prediction">
        <sequence resource="EMBL-CDS" id="BAB02412"/>
    </conflict>
</comment>
<sequence length="524" mass="57654">MAHRQLYSYALQPSYAAAASTVSPAPPPPQQPLPPKTGLSSLYGSSADHYFPDTTYRFLARDGSEALSNYSGTLASSSSMYHHLPNTTASHLAYPQLLQHQEVAWPPGVEVPGAASAVEPLPPGVKRTSEALYYPTLLGAHNTIGQTEAWYTTDYFTKRPKLESTSHLPIYPQRAGEKDCTHYMQTRTCKFGESCRFDHPIWVPEGGIPDWKEAPVVPNEEYPERPGEPDCPYYIKTQRCKYGSKCKFNHPREEAAVSVETQDSLPERPSEPMCTFYMKTGKCKFGLSCKFHHPKDIQLPSSSQDIGSSVGLTSEPDATNNPHVTFTPALYHNSKGLPVRSGEVDCPFYLKTGSCKYGATCRYNHPERTAFIPQAAGVNYSLVSSNTANLNLGLVTPATSFYQTLTQPTLGVISATYPQRPGQSECDYYMKTGECKFGERCKFHHPADRLSAMTKQAPQQPNVKLSLAGYPRREGALNCPYYMKTGTCKYGATCKFDHPPPGEVMAKTTSEADAAGATNTDTTQ</sequence>
<name>C3H37_ARATH</name>
<keyword id="KW-0217">Developmental protein</keyword>
<keyword id="KW-0221">Differentiation</keyword>
<keyword id="KW-0238">DNA-binding</keyword>
<keyword id="KW-0287">Flowering</keyword>
<keyword id="KW-0479">Metal-binding</keyword>
<keyword id="KW-0507">mRNA processing</keyword>
<keyword id="KW-0539">Nucleus</keyword>
<keyword id="KW-1185">Reference proteome</keyword>
<keyword id="KW-0677">Repeat</keyword>
<keyword id="KW-0694">RNA-binding</keyword>
<keyword id="KW-0862">Zinc</keyword>
<keyword id="KW-0863">Zinc-finger</keyword>
<protein>
    <recommendedName>
        <fullName>Zinc finger CCCH domain-containing protein 37</fullName>
        <shortName>AtC3H37</shortName>
    </recommendedName>
    <alternativeName>
        <fullName>ENHANCER OF AG-4 protein 1</fullName>
    </alternativeName>
</protein>
<dbReference type="EMBL" id="AY024357">
    <property type="protein sequence ID" value="AAK01470.1"/>
    <property type="molecule type" value="mRNA"/>
</dbReference>
<dbReference type="EMBL" id="AB024033">
    <property type="protein sequence ID" value="BAB02412.1"/>
    <property type="status" value="ALT_SEQ"/>
    <property type="molecule type" value="Genomic_DNA"/>
</dbReference>
<dbReference type="EMBL" id="AC069474">
    <property type="protein sequence ID" value="AAG51026.1"/>
    <property type="molecule type" value="Genomic_DNA"/>
</dbReference>
<dbReference type="EMBL" id="CP002686">
    <property type="protein sequence ID" value="AEE75231.1"/>
    <property type="molecule type" value="Genomic_DNA"/>
</dbReference>
<dbReference type="EMBL" id="AK229145">
    <property type="protein sequence ID" value="BAF01019.1"/>
    <property type="molecule type" value="mRNA"/>
</dbReference>
<dbReference type="RefSeq" id="NP_187874.2">
    <property type="nucleotide sequence ID" value="NM_112103.3"/>
</dbReference>
<dbReference type="BioGRID" id="5782">
    <property type="interactions" value="2"/>
</dbReference>
<dbReference type="FunCoup" id="Q941Q3">
    <property type="interactions" value="2310"/>
</dbReference>
<dbReference type="STRING" id="3702.Q941Q3"/>
<dbReference type="GlyGen" id="Q941Q3">
    <property type="glycosylation" value="1 site, 1 O-linked glycan (1 site)"/>
</dbReference>
<dbReference type="PaxDb" id="3702-AT3G12680.1"/>
<dbReference type="ProteomicsDB" id="239114"/>
<dbReference type="EnsemblPlants" id="AT3G12680.1">
    <property type="protein sequence ID" value="AT3G12680.1"/>
    <property type="gene ID" value="AT3G12680"/>
</dbReference>
<dbReference type="GeneID" id="820448"/>
<dbReference type="Gramene" id="AT3G12680.1">
    <property type="protein sequence ID" value="AT3G12680.1"/>
    <property type="gene ID" value="AT3G12680"/>
</dbReference>
<dbReference type="KEGG" id="ath:AT3G12680"/>
<dbReference type="Araport" id="AT3G12680"/>
<dbReference type="TAIR" id="AT3G12680">
    <property type="gene designation" value="HUA1"/>
</dbReference>
<dbReference type="eggNOG" id="KOG1677">
    <property type="taxonomic scope" value="Eukaryota"/>
</dbReference>
<dbReference type="HOGENOM" id="CLU_033292_0_1_1"/>
<dbReference type="InParanoid" id="Q941Q3"/>
<dbReference type="OMA" id="QPIMGSH"/>
<dbReference type="OrthoDB" id="411372at2759"/>
<dbReference type="PhylomeDB" id="Q941Q3"/>
<dbReference type="PRO" id="PR:Q941Q3"/>
<dbReference type="Proteomes" id="UP000006548">
    <property type="component" value="Chromosome 3"/>
</dbReference>
<dbReference type="ExpressionAtlas" id="Q941Q3">
    <property type="expression patterns" value="baseline and differential"/>
</dbReference>
<dbReference type="GO" id="GO:0016607">
    <property type="term" value="C:nuclear speck"/>
    <property type="evidence" value="ECO:0007669"/>
    <property type="project" value="UniProtKB-SubCell"/>
</dbReference>
<dbReference type="GO" id="GO:0005634">
    <property type="term" value="C:nucleus"/>
    <property type="evidence" value="ECO:0000314"/>
    <property type="project" value="TAIR"/>
</dbReference>
<dbReference type="GO" id="GO:0003677">
    <property type="term" value="F:DNA binding"/>
    <property type="evidence" value="ECO:0007669"/>
    <property type="project" value="UniProtKB-KW"/>
</dbReference>
<dbReference type="GO" id="GO:0003729">
    <property type="term" value="F:mRNA binding"/>
    <property type="evidence" value="ECO:0000314"/>
    <property type="project" value="TAIR"/>
</dbReference>
<dbReference type="GO" id="GO:0003723">
    <property type="term" value="F:RNA binding"/>
    <property type="evidence" value="ECO:0000314"/>
    <property type="project" value="TAIR"/>
</dbReference>
<dbReference type="GO" id="GO:0008270">
    <property type="term" value="F:zinc ion binding"/>
    <property type="evidence" value="ECO:0007669"/>
    <property type="project" value="UniProtKB-KW"/>
</dbReference>
<dbReference type="GO" id="GO:0001709">
    <property type="term" value="P:cell fate determination"/>
    <property type="evidence" value="ECO:0000304"/>
    <property type="project" value="TAIR"/>
</dbReference>
<dbReference type="GO" id="GO:0009908">
    <property type="term" value="P:flower development"/>
    <property type="evidence" value="ECO:0007669"/>
    <property type="project" value="UniProtKB-KW"/>
</dbReference>
<dbReference type="GO" id="GO:0006397">
    <property type="term" value="P:mRNA processing"/>
    <property type="evidence" value="ECO:0007669"/>
    <property type="project" value="UniProtKB-KW"/>
</dbReference>
<dbReference type="FunFam" id="2.30.30.1190:FF:000004">
    <property type="entry name" value="Zinc finger CCCH domain-containing protein 37"/>
    <property type="match status" value="1"/>
</dbReference>
<dbReference type="FunFam" id="4.10.1000.10:FF:000033">
    <property type="entry name" value="zinc finger CCCH domain-containing protein 37"/>
    <property type="match status" value="1"/>
</dbReference>
<dbReference type="Gene3D" id="2.30.30.1190">
    <property type="match status" value="2"/>
</dbReference>
<dbReference type="Gene3D" id="4.10.1000.10">
    <property type="entry name" value="Zinc finger, CCCH-type"/>
    <property type="match status" value="2"/>
</dbReference>
<dbReference type="InterPro" id="IPR050974">
    <property type="entry name" value="Plant_ZF_CCCH"/>
</dbReference>
<dbReference type="InterPro" id="IPR000571">
    <property type="entry name" value="Znf_CCCH"/>
</dbReference>
<dbReference type="InterPro" id="IPR036855">
    <property type="entry name" value="Znf_CCCH_sf"/>
</dbReference>
<dbReference type="PANTHER" id="PTHR12506">
    <property type="entry name" value="PROTEIN PHOSPHATASE RELATED"/>
    <property type="match status" value="1"/>
</dbReference>
<dbReference type="PANTHER" id="PTHR12506:SF82">
    <property type="entry name" value="ZINC FINGER CCCH DOMAIN-CONTAINING PROTEIN 64-RELATED"/>
    <property type="match status" value="1"/>
</dbReference>
<dbReference type="Pfam" id="PF00642">
    <property type="entry name" value="zf-CCCH"/>
    <property type="match status" value="6"/>
</dbReference>
<dbReference type="SMART" id="SM00356">
    <property type="entry name" value="ZnF_C3H1"/>
    <property type="match status" value="6"/>
</dbReference>
<dbReference type="SUPFAM" id="SSF90229">
    <property type="entry name" value="CCCH zinc finger"/>
    <property type="match status" value="6"/>
</dbReference>
<dbReference type="PROSITE" id="PS50103">
    <property type="entry name" value="ZF_C3H1"/>
    <property type="match status" value="6"/>
</dbReference>
<evidence type="ECO:0000255" key="1">
    <source>
        <dbReference type="PROSITE-ProRule" id="PRU00723"/>
    </source>
</evidence>
<evidence type="ECO:0000256" key="2">
    <source>
        <dbReference type="SAM" id="MobiDB-lite"/>
    </source>
</evidence>
<evidence type="ECO:0000269" key="3">
    <source>
    </source>
</evidence>
<evidence type="ECO:0000269" key="4">
    <source>
    </source>
</evidence>
<evidence type="ECO:0000269" key="5">
    <source>
    </source>
</evidence>
<evidence type="ECO:0000305" key="6"/>